<gene>
    <name evidence="1" type="primary">rplS</name>
    <name type="ordered locus">MGAS9429_Spy0604</name>
</gene>
<proteinExistence type="inferred from homology"/>
<sequence length="115" mass="13145">MNPLIQSLTEGQLRSDIPNFRPGDTVRVHAKVVEGTRERIQIFEGVVISRKGQGISEMYTVRKISGGIGVERTFPIHTPRVDKIEVIRHGKVRRAKLYYLRALQGKAARIKEIRR</sequence>
<name>RL19_STRPC</name>
<accession>Q1JMM0</accession>
<dbReference type="EMBL" id="CP000259">
    <property type="protein sequence ID" value="ABF31792.1"/>
    <property type="molecule type" value="Genomic_DNA"/>
</dbReference>
<dbReference type="RefSeq" id="WP_002985298.1">
    <property type="nucleotide sequence ID" value="NC_008021.1"/>
</dbReference>
<dbReference type="SMR" id="Q1JMM0"/>
<dbReference type="GeneID" id="69901140"/>
<dbReference type="KEGG" id="spk:MGAS9429_Spy0604"/>
<dbReference type="HOGENOM" id="CLU_103507_2_1_9"/>
<dbReference type="Proteomes" id="UP000002433">
    <property type="component" value="Chromosome"/>
</dbReference>
<dbReference type="GO" id="GO:0022625">
    <property type="term" value="C:cytosolic large ribosomal subunit"/>
    <property type="evidence" value="ECO:0007669"/>
    <property type="project" value="TreeGrafter"/>
</dbReference>
<dbReference type="GO" id="GO:0003735">
    <property type="term" value="F:structural constituent of ribosome"/>
    <property type="evidence" value="ECO:0007669"/>
    <property type="project" value="InterPro"/>
</dbReference>
<dbReference type="GO" id="GO:0006412">
    <property type="term" value="P:translation"/>
    <property type="evidence" value="ECO:0007669"/>
    <property type="project" value="UniProtKB-UniRule"/>
</dbReference>
<dbReference type="FunFam" id="2.30.30.790:FF:000001">
    <property type="entry name" value="50S ribosomal protein L19"/>
    <property type="match status" value="1"/>
</dbReference>
<dbReference type="Gene3D" id="2.30.30.790">
    <property type="match status" value="1"/>
</dbReference>
<dbReference type="HAMAP" id="MF_00402">
    <property type="entry name" value="Ribosomal_bL19"/>
    <property type="match status" value="1"/>
</dbReference>
<dbReference type="InterPro" id="IPR001857">
    <property type="entry name" value="Ribosomal_bL19"/>
</dbReference>
<dbReference type="InterPro" id="IPR018257">
    <property type="entry name" value="Ribosomal_bL19_CS"/>
</dbReference>
<dbReference type="InterPro" id="IPR038657">
    <property type="entry name" value="Ribosomal_bL19_sf"/>
</dbReference>
<dbReference type="InterPro" id="IPR008991">
    <property type="entry name" value="Translation_prot_SH3-like_sf"/>
</dbReference>
<dbReference type="NCBIfam" id="TIGR01024">
    <property type="entry name" value="rplS_bact"/>
    <property type="match status" value="1"/>
</dbReference>
<dbReference type="PANTHER" id="PTHR15680:SF9">
    <property type="entry name" value="LARGE RIBOSOMAL SUBUNIT PROTEIN BL19M"/>
    <property type="match status" value="1"/>
</dbReference>
<dbReference type="PANTHER" id="PTHR15680">
    <property type="entry name" value="RIBOSOMAL PROTEIN L19"/>
    <property type="match status" value="1"/>
</dbReference>
<dbReference type="Pfam" id="PF01245">
    <property type="entry name" value="Ribosomal_L19"/>
    <property type="match status" value="1"/>
</dbReference>
<dbReference type="PIRSF" id="PIRSF002191">
    <property type="entry name" value="Ribosomal_L19"/>
    <property type="match status" value="1"/>
</dbReference>
<dbReference type="PRINTS" id="PR00061">
    <property type="entry name" value="RIBOSOMALL19"/>
</dbReference>
<dbReference type="SUPFAM" id="SSF50104">
    <property type="entry name" value="Translation proteins SH3-like domain"/>
    <property type="match status" value="1"/>
</dbReference>
<dbReference type="PROSITE" id="PS01015">
    <property type="entry name" value="RIBOSOMAL_L19"/>
    <property type="match status" value="1"/>
</dbReference>
<comment type="function">
    <text evidence="1">This protein is located at the 30S-50S ribosomal subunit interface and may play a role in the structure and function of the aminoacyl-tRNA binding site.</text>
</comment>
<comment type="similarity">
    <text evidence="1">Belongs to the bacterial ribosomal protein bL19 family.</text>
</comment>
<evidence type="ECO:0000255" key="1">
    <source>
        <dbReference type="HAMAP-Rule" id="MF_00402"/>
    </source>
</evidence>
<evidence type="ECO:0000305" key="2"/>
<keyword id="KW-0687">Ribonucleoprotein</keyword>
<keyword id="KW-0689">Ribosomal protein</keyword>
<reference key="1">
    <citation type="journal article" date="2006" name="Proc. Natl. Acad. Sci. U.S.A.">
        <title>Molecular genetic anatomy of inter- and intraserotype variation in the human bacterial pathogen group A Streptococcus.</title>
        <authorList>
            <person name="Beres S.B."/>
            <person name="Richter E.W."/>
            <person name="Nagiec M.J."/>
            <person name="Sumby P."/>
            <person name="Porcella S.F."/>
            <person name="DeLeo F.R."/>
            <person name="Musser J.M."/>
        </authorList>
    </citation>
    <scope>NUCLEOTIDE SEQUENCE [LARGE SCALE GENOMIC DNA]</scope>
    <source>
        <strain>MGAS9429</strain>
    </source>
</reference>
<organism>
    <name type="scientific">Streptococcus pyogenes serotype M12 (strain MGAS9429)</name>
    <dbReference type="NCBI Taxonomy" id="370551"/>
    <lineage>
        <taxon>Bacteria</taxon>
        <taxon>Bacillati</taxon>
        <taxon>Bacillota</taxon>
        <taxon>Bacilli</taxon>
        <taxon>Lactobacillales</taxon>
        <taxon>Streptococcaceae</taxon>
        <taxon>Streptococcus</taxon>
    </lineage>
</organism>
<protein>
    <recommendedName>
        <fullName evidence="1">Large ribosomal subunit protein bL19</fullName>
    </recommendedName>
    <alternativeName>
        <fullName evidence="2">50S ribosomal protein L19</fullName>
    </alternativeName>
</protein>
<feature type="chain" id="PRO_0000252549" description="Large ribosomal subunit protein bL19">
    <location>
        <begin position="1"/>
        <end position="115"/>
    </location>
</feature>